<name>RLMN_STRP3</name>
<feature type="chain" id="PRO_0000350464" description="Probable dual-specificity RNA methyltransferase RlmN">
    <location>
        <begin position="1"/>
        <end position="359"/>
    </location>
</feature>
<feature type="domain" description="Radical SAM core" evidence="2">
    <location>
        <begin position="97"/>
        <end position="329"/>
    </location>
</feature>
<feature type="active site" description="Proton acceptor" evidence="1">
    <location>
        <position position="91"/>
    </location>
</feature>
<feature type="active site" description="S-methylcysteine intermediate" evidence="1">
    <location>
        <position position="340"/>
    </location>
</feature>
<feature type="binding site" evidence="1">
    <location>
        <position position="111"/>
    </location>
    <ligand>
        <name>[4Fe-4S] cluster</name>
        <dbReference type="ChEBI" id="CHEBI:49883"/>
        <note>4Fe-4S-S-AdoMet</note>
    </ligand>
</feature>
<feature type="binding site" evidence="1">
    <location>
        <position position="115"/>
    </location>
    <ligand>
        <name>[4Fe-4S] cluster</name>
        <dbReference type="ChEBI" id="CHEBI:49883"/>
        <note>4Fe-4S-S-AdoMet</note>
    </ligand>
</feature>
<feature type="binding site" evidence="1">
    <location>
        <position position="118"/>
    </location>
    <ligand>
        <name>[4Fe-4S] cluster</name>
        <dbReference type="ChEBI" id="CHEBI:49883"/>
        <note>4Fe-4S-S-AdoMet</note>
    </ligand>
</feature>
<feature type="binding site" evidence="1">
    <location>
        <begin position="163"/>
        <end position="164"/>
    </location>
    <ligand>
        <name>S-adenosyl-L-methionine</name>
        <dbReference type="ChEBI" id="CHEBI:59789"/>
    </ligand>
</feature>
<feature type="binding site" evidence="1">
    <location>
        <position position="195"/>
    </location>
    <ligand>
        <name>S-adenosyl-L-methionine</name>
        <dbReference type="ChEBI" id="CHEBI:59789"/>
    </ligand>
</feature>
<feature type="binding site" evidence="1">
    <location>
        <begin position="218"/>
        <end position="220"/>
    </location>
    <ligand>
        <name>S-adenosyl-L-methionine</name>
        <dbReference type="ChEBI" id="CHEBI:59789"/>
    </ligand>
</feature>
<feature type="binding site" evidence="1">
    <location>
        <position position="296"/>
    </location>
    <ligand>
        <name>S-adenosyl-L-methionine</name>
        <dbReference type="ChEBI" id="CHEBI:59789"/>
    </ligand>
</feature>
<feature type="disulfide bond" description="(transient)" evidence="1">
    <location>
        <begin position="104"/>
        <end position="340"/>
    </location>
</feature>
<proteinExistence type="inferred from homology"/>
<evidence type="ECO:0000255" key="1">
    <source>
        <dbReference type="HAMAP-Rule" id="MF_01849"/>
    </source>
</evidence>
<evidence type="ECO:0000255" key="2">
    <source>
        <dbReference type="PROSITE-ProRule" id="PRU01266"/>
    </source>
</evidence>
<comment type="function">
    <text evidence="1">Specifically methylates position 2 of adenine 2503 in 23S rRNA and position 2 of adenine 37 in tRNAs.</text>
</comment>
<comment type="catalytic activity">
    <reaction evidence="1">
        <text>adenosine(2503) in 23S rRNA + 2 reduced [2Fe-2S]-[ferredoxin] + 2 S-adenosyl-L-methionine = 2-methyladenosine(2503) in 23S rRNA + 5'-deoxyadenosine + L-methionine + 2 oxidized [2Fe-2S]-[ferredoxin] + S-adenosyl-L-homocysteine</text>
        <dbReference type="Rhea" id="RHEA:42916"/>
        <dbReference type="Rhea" id="RHEA-COMP:10000"/>
        <dbReference type="Rhea" id="RHEA-COMP:10001"/>
        <dbReference type="Rhea" id="RHEA-COMP:10152"/>
        <dbReference type="Rhea" id="RHEA-COMP:10282"/>
        <dbReference type="ChEBI" id="CHEBI:17319"/>
        <dbReference type="ChEBI" id="CHEBI:33737"/>
        <dbReference type="ChEBI" id="CHEBI:33738"/>
        <dbReference type="ChEBI" id="CHEBI:57844"/>
        <dbReference type="ChEBI" id="CHEBI:57856"/>
        <dbReference type="ChEBI" id="CHEBI:59789"/>
        <dbReference type="ChEBI" id="CHEBI:74411"/>
        <dbReference type="ChEBI" id="CHEBI:74497"/>
        <dbReference type="EC" id="2.1.1.192"/>
    </reaction>
</comment>
<comment type="catalytic activity">
    <reaction evidence="1">
        <text>adenosine(37) in tRNA + 2 reduced [2Fe-2S]-[ferredoxin] + 2 S-adenosyl-L-methionine = 2-methyladenosine(37) in tRNA + 5'-deoxyadenosine + L-methionine + 2 oxidized [2Fe-2S]-[ferredoxin] + S-adenosyl-L-homocysteine</text>
        <dbReference type="Rhea" id="RHEA:43332"/>
        <dbReference type="Rhea" id="RHEA-COMP:10000"/>
        <dbReference type="Rhea" id="RHEA-COMP:10001"/>
        <dbReference type="Rhea" id="RHEA-COMP:10162"/>
        <dbReference type="Rhea" id="RHEA-COMP:10485"/>
        <dbReference type="ChEBI" id="CHEBI:17319"/>
        <dbReference type="ChEBI" id="CHEBI:33737"/>
        <dbReference type="ChEBI" id="CHEBI:33738"/>
        <dbReference type="ChEBI" id="CHEBI:57844"/>
        <dbReference type="ChEBI" id="CHEBI:57856"/>
        <dbReference type="ChEBI" id="CHEBI:59789"/>
        <dbReference type="ChEBI" id="CHEBI:74411"/>
        <dbReference type="ChEBI" id="CHEBI:74497"/>
        <dbReference type="EC" id="2.1.1.192"/>
    </reaction>
</comment>
<comment type="cofactor">
    <cofactor evidence="1">
        <name>[4Fe-4S] cluster</name>
        <dbReference type="ChEBI" id="CHEBI:49883"/>
    </cofactor>
    <text evidence="1">Binds 1 [4Fe-4S] cluster. The cluster is coordinated with 3 cysteines and an exchangeable S-adenosyl-L-methionine.</text>
</comment>
<comment type="subcellular location">
    <subcellularLocation>
        <location evidence="1">Cytoplasm</location>
    </subcellularLocation>
</comment>
<comment type="miscellaneous">
    <text evidence="1">Reaction proceeds by a ping-pong mechanism involving intermediate methylation of a conserved cysteine residue.</text>
</comment>
<comment type="similarity">
    <text evidence="1">Belongs to the radical SAM superfamily. RlmN family.</text>
</comment>
<sequence length="359" mass="41053">MKPSIYSLTRDELIAWAVERGQKQFRATQIWDWLYKKRVQSFEEMTNISKDFVSILNDSFCVNPLKQRVVQESADGTVKYLFELPDGMLIETVLMRQHYGHSVCVTTQVGCNIGCTFCASGLIKKQRDLNSGEITAQIMLVQKYFDDRKQGERVSHVVVMGIGEPFDNYKNVMCFLRVINDDNGLAIGARHITVSTSGLAHKIRDFANEGVQVNLAVSLHAPNNDLRSSIMRVNRSFPLEKLFSAIEYYIEKTNRRVTFEYIMLNEVNDSIKQAQELADLTKTIRKLSYVNLIPYNPVSEHDQYSRSPKERVLAFYDVLKKNGVNCVVRQEHGTDIDAACGQLRSKTMKKDREKVTATK</sequence>
<keyword id="KW-0004">4Fe-4S</keyword>
<keyword id="KW-0963">Cytoplasm</keyword>
<keyword id="KW-1015">Disulfide bond</keyword>
<keyword id="KW-0408">Iron</keyword>
<keyword id="KW-0411">Iron-sulfur</keyword>
<keyword id="KW-0479">Metal-binding</keyword>
<keyword id="KW-0489">Methyltransferase</keyword>
<keyword id="KW-0698">rRNA processing</keyword>
<keyword id="KW-0949">S-adenosyl-L-methionine</keyword>
<keyword id="KW-0808">Transferase</keyword>
<keyword id="KW-0819">tRNA processing</keyword>
<organism>
    <name type="scientific">Streptococcus pyogenes serotype M3 (strain ATCC BAA-595 / MGAS315)</name>
    <dbReference type="NCBI Taxonomy" id="198466"/>
    <lineage>
        <taxon>Bacteria</taxon>
        <taxon>Bacillati</taxon>
        <taxon>Bacillota</taxon>
        <taxon>Bacilli</taxon>
        <taxon>Lactobacillales</taxon>
        <taxon>Streptococcaceae</taxon>
        <taxon>Streptococcus</taxon>
    </lineage>
</organism>
<gene>
    <name evidence="1" type="primary">rlmN</name>
    <name type="ordered locus">SpyM3_1184</name>
</gene>
<dbReference type="EC" id="2.1.1.192" evidence="1"/>
<dbReference type="EMBL" id="AE014074">
    <property type="protein sequence ID" value="AAM79791.1"/>
    <property type="molecule type" value="Genomic_DNA"/>
</dbReference>
<dbReference type="RefSeq" id="WP_002992788.1">
    <property type="nucleotide sequence ID" value="NC_004070.1"/>
</dbReference>
<dbReference type="SMR" id="P0DF10"/>
<dbReference type="KEGG" id="spg:SpyM3_1184"/>
<dbReference type="HOGENOM" id="CLU_029101_0_1_9"/>
<dbReference type="Proteomes" id="UP000000564">
    <property type="component" value="Chromosome"/>
</dbReference>
<dbReference type="GO" id="GO:0005737">
    <property type="term" value="C:cytoplasm"/>
    <property type="evidence" value="ECO:0007669"/>
    <property type="project" value="UniProtKB-SubCell"/>
</dbReference>
<dbReference type="GO" id="GO:0051539">
    <property type="term" value="F:4 iron, 4 sulfur cluster binding"/>
    <property type="evidence" value="ECO:0007669"/>
    <property type="project" value="UniProtKB-UniRule"/>
</dbReference>
<dbReference type="GO" id="GO:0046872">
    <property type="term" value="F:metal ion binding"/>
    <property type="evidence" value="ECO:0007669"/>
    <property type="project" value="UniProtKB-KW"/>
</dbReference>
<dbReference type="GO" id="GO:0070040">
    <property type="term" value="F:rRNA (adenine(2503)-C2-)-methyltransferase activity"/>
    <property type="evidence" value="ECO:0007669"/>
    <property type="project" value="UniProtKB-UniRule"/>
</dbReference>
<dbReference type="GO" id="GO:0019843">
    <property type="term" value="F:rRNA binding"/>
    <property type="evidence" value="ECO:0007669"/>
    <property type="project" value="UniProtKB-UniRule"/>
</dbReference>
<dbReference type="GO" id="GO:0002935">
    <property type="term" value="F:tRNA (adenine(37)-C2)-methyltransferase activity"/>
    <property type="evidence" value="ECO:0007669"/>
    <property type="project" value="UniProtKB-UniRule"/>
</dbReference>
<dbReference type="GO" id="GO:0000049">
    <property type="term" value="F:tRNA binding"/>
    <property type="evidence" value="ECO:0007669"/>
    <property type="project" value="UniProtKB-UniRule"/>
</dbReference>
<dbReference type="GO" id="GO:0070475">
    <property type="term" value="P:rRNA base methylation"/>
    <property type="evidence" value="ECO:0007669"/>
    <property type="project" value="UniProtKB-UniRule"/>
</dbReference>
<dbReference type="GO" id="GO:0030488">
    <property type="term" value="P:tRNA methylation"/>
    <property type="evidence" value="ECO:0007669"/>
    <property type="project" value="UniProtKB-UniRule"/>
</dbReference>
<dbReference type="CDD" id="cd01335">
    <property type="entry name" value="Radical_SAM"/>
    <property type="match status" value="1"/>
</dbReference>
<dbReference type="FunFam" id="3.20.20.70:FF:000014">
    <property type="entry name" value="Probable dual-specificity RNA methyltransferase RlmN"/>
    <property type="match status" value="1"/>
</dbReference>
<dbReference type="Gene3D" id="1.10.150.530">
    <property type="match status" value="1"/>
</dbReference>
<dbReference type="Gene3D" id="3.20.20.70">
    <property type="entry name" value="Aldolase class I"/>
    <property type="match status" value="1"/>
</dbReference>
<dbReference type="HAMAP" id="MF_01849">
    <property type="entry name" value="RNA_methyltr_RlmN"/>
    <property type="match status" value="1"/>
</dbReference>
<dbReference type="InterPro" id="IPR013785">
    <property type="entry name" value="Aldolase_TIM"/>
</dbReference>
<dbReference type="InterPro" id="IPR040072">
    <property type="entry name" value="Methyltransferase_A"/>
</dbReference>
<dbReference type="InterPro" id="IPR048641">
    <property type="entry name" value="RlmN_N"/>
</dbReference>
<dbReference type="InterPro" id="IPR027492">
    <property type="entry name" value="RNA_MTrfase_RlmN"/>
</dbReference>
<dbReference type="InterPro" id="IPR004383">
    <property type="entry name" value="rRNA_lsu_MTrfase_RlmN/Cfr"/>
</dbReference>
<dbReference type="InterPro" id="IPR007197">
    <property type="entry name" value="rSAM"/>
</dbReference>
<dbReference type="NCBIfam" id="TIGR00048">
    <property type="entry name" value="rRNA_mod_RlmN"/>
    <property type="match status" value="1"/>
</dbReference>
<dbReference type="PANTHER" id="PTHR30544">
    <property type="entry name" value="23S RRNA METHYLTRANSFERASE"/>
    <property type="match status" value="1"/>
</dbReference>
<dbReference type="PANTHER" id="PTHR30544:SF5">
    <property type="entry name" value="RADICAL SAM CORE DOMAIN-CONTAINING PROTEIN"/>
    <property type="match status" value="1"/>
</dbReference>
<dbReference type="Pfam" id="PF04055">
    <property type="entry name" value="Radical_SAM"/>
    <property type="match status" value="1"/>
</dbReference>
<dbReference type="Pfam" id="PF21016">
    <property type="entry name" value="RlmN_N"/>
    <property type="match status" value="1"/>
</dbReference>
<dbReference type="PIRSF" id="PIRSF006004">
    <property type="entry name" value="CHP00048"/>
    <property type="match status" value="1"/>
</dbReference>
<dbReference type="SFLD" id="SFLDF00275">
    <property type="entry name" value="adenosine_C2_methyltransferase"/>
    <property type="match status" value="1"/>
</dbReference>
<dbReference type="SFLD" id="SFLDS00029">
    <property type="entry name" value="Radical_SAM"/>
    <property type="match status" value="1"/>
</dbReference>
<dbReference type="SUPFAM" id="SSF102114">
    <property type="entry name" value="Radical SAM enzymes"/>
    <property type="match status" value="1"/>
</dbReference>
<dbReference type="PROSITE" id="PS51918">
    <property type="entry name" value="RADICAL_SAM"/>
    <property type="match status" value="1"/>
</dbReference>
<accession>P0DF10</accession>
<accession>Q79XR4</accession>
<accession>Q7CEX7</accession>
<reference key="1">
    <citation type="journal article" date="2002" name="Proc. Natl. Acad. Sci. U.S.A.">
        <title>Genome sequence of a serotype M3 strain of group A Streptococcus: phage-encoded toxins, the high-virulence phenotype, and clone emergence.</title>
        <authorList>
            <person name="Beres S.B."/>
            <person name="Sylva G.L."/>
            <person name="Barbian K.D."/>
            <person name="Lei B."/>
            <person name="Hoff J.S."/>
            <person name="Mammarella N.D."/>
            <person name="Liu M.-Y."/>
            <person name="Smoot J.C."/>
            <person name="Porcella S.F."/>
            <person name="Parkins L.D."/>
            <person name="Campbell D.S."/>
            <person name="Smith T.M."/>
            <person name="McCormick J.K."/>
            <person name="Leung D.Y.M."/>
            <person name="Schlievert P.M."/>
            <person name="Musser J.M."/>
        </authorList>
    </citation>
    <scope>NUCLEOTIDE SEQUENCE [LARGE SCALE GENOMIC DNA]</scope>
    <source>
        <strain>ATCC BAA-595 / MGAS315</strain>
    </source>
</reference>
<protein>
    <recommendedName>
        <fullName evidence="1">Probable dual-specificity RNA methyltransferase RlmN</fullName>
        <ecNumber evidence="1">2.1.1.192</ecNumber>
    </recommendedName>
    <alternativeName>
        <fullName evidence="1">23S rRNA (adenine(2503)-C(2))-methyltransferase</fullName>
    </alternativeName>
    <alternativeName>
        <fullName evidence="1">23S rRNA m2A2503 methyltransferase</fullName>
    </alternativeName>
    <alternativeName>
        <fullName evidence="1">Ribosomal RNA large subunit methyltransferase N</fullName>
    </alternativeName>
    <alternativeName>
        <fullName evidence="1">tRNA (adenine(37)-C(2))-methyltransferase</fullName>
    </alternativeName>
    <alternativeName>
        <fullName evidence="1">tRNA m2A37 methyltransferase</fullName>
    </alternativeName>
</protein>